<protein>
    <recommendedName>
        <fullName evidence="1">L-seryl-tRNA(Sec) selenium transferase</fullName>
        <ecNumber evidence="1">2.9.1.1</ecNumber>
    </recommendedName>
    <alternativeName>
        <fullName evidence="1">Selenocysteine synthase</fullName>
        <shortName evidence="1">Sec synthase</shortName>
    </alternativeName>
    <alternativeName>
        <fullName evidence="1">Selenocysteinyl-tRNA(Sec) synthase</fullName>
    </alternativeName>
</protein>
<reference key="1">
    <citation type="journal article" date="2000" name="Nature">
        <title>The genome sequence of the food-borne pathogen Campylobacter jejuni reveals hypervariable sequences.</title>
        <authorList>
            <person name="Parkhill J."/>
            <person name="Wren B.W."/>
            <person name="Mungall K.L."/>
            <person name="Ketley J.M."/>
            <person name="Churcher C.M."/>
            <person name="Basham D."/>
            <person name="Chillingworth T."/>
            <person name="Davies R.M."/>
            <person name="Feltwell T."/>
            <person name="Holroyd S."/>
            <person name="Jagels K."/>
            <person name="Karlyshev A.V."/>
            <person name="Moule S."/>
            <person name="Pallen M.J."/>
            <person name="Penn C.W."/>
            <person name="Quail M.A."/>
            <person name="Rajandream M.A."/>
            <person name="Rutherford K.M."/>
            <person name="van Vliet A.H.M."/>
            <person name="Whitehead S."/>
            <person name="Barrell B.G."/>
        </authorList>
    </citation>
    <scope>NUCLEOTIDE SEQUENCE [LARGE SCALE GENOMIC DNA]</scope>
    <source>
        <strain>ATCC 700819 / NCTC 11168</strain>
    </source>
</reference>
<feature type="chain" id="PRO_0000189595" description="L-seryl-tRNA(Sec) selenium transferase">
    <location>
        <begin position="1"/>
        <end position="440"/>
    </location>
</feature>
<feature type="modified residue" description="N6-(pyridoxal phosphate)lysine" evidence="1">
    <location>
        <position position="282"/>
    </location>
</feature>
<gene>
    <name evidence="1" type="primary">selA</name>
    <name type="ordered locus">Cj1378</name>
</gene>
<accession>Q9PMS2</accession>
<accession>Q0P8N1</accession>
<name>SELA_CAMJE</name>
<keyword id="KW-0963">Cytoplasm</keyword>
<keyword id="KW-0648">Protein biosynthesis</keyword>
<keyword id="KW-0663">Pyridoxal phosphate</keyword>
<keyword id="KW-1185">Reference proteome</keyword>
<keyword id="KW-0711">Selenium</keyword>
<keyword id="KW-0808">Transferase</keyword>
<dbReference type="EC" id="2.9.1.1" evidence="1"/>
<dbReference type="EMBL" id="AL111168">
    <property type="protein sequence ID" value="CAL35490.1"/>
    <property type="molecule type" value="Genomic_DNA"/>
</dbReference>
<dbReference type="PIR" id="G81282">
    <property type="entry name" value="G81282"/>
</dbReference>
<dbReference type="RefSeq" id="WP_002858009.1">
    <property type="nucleotide sequence ID" value="NZ_SZUC01000003.1"/>
</dbReference>
<dbReference type="RefSeq" id="YP_002344766.1">
    <property type="nucleotide sequence ID" value="NC_002163.1"/>
</dbReference>
<dbReference type="SMR" id="Q9PMS2"/>
<dbReference type="IntAct" id="Q9PMS2">
    <property type="interactions" value="24"/>
</dbReference>
<dbReference type="STRING" id="192222.Cj1378"/>
<dbReference type="PaxDb" id="192222-Cj1378"/>
<dbReference type="EnsemblBacteria" id="CAL35490">
    <property type="protein sequence ID" value="CAL35490"/>
    <property type="gene ID" value="Cj1378"/>
</dbReference>
<dbReference type="GeneID" id="905671"/>
<dbReference type="KEGG" id="cje:Cj1378"/>
<dbReference type="PATRIC" id="fig|192222.6.peg.1359"/>
<dbReference type="eggNOG" id="COG1921">
    <property type="taxonomic scope" value="Bacteria"/>
</dbReference>
<dbReference type="HOGENOM" id="CLU_038142_1_0_7"/>
<dbReference type="OrthoDB" id="9787096at2"/>
<dbReference type="UniPathway" id="UPA00906">
    <property type="reaction ID" value="UER00896"/>
</dbReference>
<dbReference type="Proteomes" id="UP000000799">
    <property type="component" value="Chromosome"/>
</dbReference>
<dbReference type="GO" id="GO:0005737">
    <property type="term" value="C:cytoplasm"/>
    <property type="evidence" value="ECO:0007669"/>
    <property type="project" value="UniProtKB-SubCell"/>
</dbReference>
<dbReference type="GO" id="GO:0004125">
    <property type="term" value="F:L-seryl-tRNA(Sec) selenium transferase activity"/>
    <property type="evidence" value="ECO:0007669"/>
    <property type="project" value="UniProtKB-UniRule"/>
</dbReference>
<dbReference type="GO" id="GO:0001717">
    <property type="term" value="P:conversion of seryl-tRNAsec to selenocys-tRNAsec"/>
    <property type="evidence" value="ECO:0007669"/>
    <property type="project" value="UniProtKB-UniRule"/>
</dbReference>
<dbReference type="GO" id="GO:0001514">
    <property type="term" value="P:selenocysteine incorporation"/>
    <property type="evidence" value="ECO:0007669"/>
    <property type="project" value="UniProtKB-UniRule"/>
</dbReference>
<dbReference type="Gene3D" id="3.90.1150.180">
    <property type="match status" value="1"/>
</dbReference>
<dbReference type="Gene3D" id="3.40.640.10">
    <property type="entry name" value="Type I PLP-dependent aspartate aminotransferase-like (Major domain)"/>
    <property type="match status" value="1"/>
</dbReference>
<dbReference type="HAMAP" id="MF_00423">
    <property type="entry name" value="SelA"/>
    <property type="match status" value="1"/>
</dbReference>
<dbReference type="InterPro" id="IPR015424">
    <property type="entry name" value="PyrdxlP-dep_Trfase"/>
</dbReference>
<dbReference type="InterPro" id="IPR015421">
    <property type="entry name" value="PyrdxlP-dep_Trfase_major"/>
</dbReference>
<dbReference type="InterPro" id="IPR018319">
    <property type="entry name" value="SelA-like"/>
</dbReference>
<dbReference type="InterPro" id="IPR004534">
    <property type="entry name" value="SelA_trans"/>
</dbReference>
<dbReference type="NCBIfam" id="TIGR00474">
    <property type="entry name" value="selA"/>
    <property type="match status" value="1"/>
</dbReference>
<dbReference type="PANTHER" id="PTHR32328">
    <property type="entry name" value="L-SERYL-TRNA(SEC) SELENIUM TRANSFERASE"/>
    <property type="match status" value="1"/>
</dbReference>
<dbReference type="PANTHER" id="PTHR32328:SF0">
    <property type="entry name" value="L-SERYL-TRNA(SEC) SELENIUM TRANSFERASE"/>
    <property type="match status" value="1"/>
</dbReference>
<dbReference type="Pfam" id="PF03841">
    <property type="entry name" value="SelA"/>
    <property type="match status" value="1"/>
</dbReference>
<dbReference type="SUPFAM" id="SSF53383">
    <property type="entry name" value="PLP-dependent transferases"/>
    <property type="match status" value="1"/>
</dbReference>
<sequence length="440" mass="50612">MNKFRTFPQINTLIEDESLKSYPFYIKAFFCKKVVAKLKENFFQDEISKDKLLLEIKKEIKTFYRKDLQSVINASGVVIHTNLGRSVIHEELYEACKDIICNYSNVEFDLENGKRGSRYALVLEKLKMLFECEDALVVNNNAAAVFLVLNSLCYDKEVISSRGELVEIGGSFRVPEVIKAAGVKLCEVGTSNKTHLKDYEQAINENTALILKTHKSNFALMGFHSEVNIKDLHELAKEKELLSYYDLGSGWCENLNEKLIKNEPKIRKLVQECDILSFSGDKLFGSVQAGIILGKKELIEKLKQNQLLRMLRVDKLTLSFLNESLKAYLQKDYEKIITLKLLNDDLSFIEKKALRVQKELKFQTQLKKSKSLVGGGSMPDKSLDTYILTFQGDALKLQTRFRKENIIGRIENDEFVLDFRTIRENELQKLILTINQMENL</sequence>
<evidence type="ECO:0000255" key="1">
    <source>
        <dbReference type="HAMAP-Rule" id="MF_00423"/>
    </source>
</evidence>
<comment type="function">
    <text evidence="1">Converts seryl-tRNA(Sec) to selenocysteinyl-tRNA(Sec) required for selenoprotein biosynthesis.</text>
</comment>
<comment type="catalytic activity">
    <reaction evidence="1">
        <text>L-seryl-tRNA(Sec) + selenophosphate + H(+) = L-selenocysteinyl-tRNA(Sec) + phosphate</text>
        <dbReference type="Rhea" id="RHEA:22728"/>
        <dbReference type="Rhea" id="RHEA-COMP:9742"/>
        <dbReference type="Rhea" id="RHEA-COMP:9743"/>
        <dbReference type="ChEBI" id="CHEBI:15378"/>
        <dbReference type="ChEBI" id="CHEBI:16144"/>
        <dbReference type="ChEBI" id="CHEBI:43474"/>
        <dbReference type="ChEBI" id="CHEBI:78533"/>
        <dbReference type="ChEBI" id="CHEBI:78573"/>
        <dbReference type="EC" id="2.9.1.1"/>
    </reaction>
</comment>
<comment type="cofactor">
    <cofactor evidence="1">
        <name>pyridoxal 5'-phosphate</name>
        <dbReference type="ChEBI" id="CHEBI:597326"/>
    </cofactor>
</comment>
<comment type="pathway">
    <text evidence="1">Aminoacyl-tRNA biosynthesis; selenocysteinyl-tRNA(Sec) biosynthesis; selenocysteinyl-tRNA(Sec) from L-seryl-tRNA(Sec) (bacterial route): step 1/1.</text>
</comment>
<comment type="subcellular location">
    <subcellularLocation>
        <location evidence="1">Cytoplasm</location>
    </subcellularLocation>
</comment>
<comment type="similarity">
    <text evidence="1">Belongs to the SelA family.</text>
</comment>
<organism>
    <name type="scientific">Campylobacter jejuni subsp. jejuni serotype O:2 (strain ATCC 700819 / NCTC 11168)</name>
    <dbReference type="NCBI Taxonomy" id="192222"/>
    <lineage>
        <taxon>Bacteria</taxon>
        <taxon>Pseudomonadati</taxon>
        <taxon>Campylobacterota</taxon>
        <taxon>Epsilonproteobacteria</taxon>
        <taxon>Campylobacterales</taxon>
        <taxon>Campylobacteraceae</taxon>
        <taxon>Campylobacter</taxon>
    </lineage>
</organism>
<proteinExistence type="inferred from homology"/>